<keyword id="KW-0030">Aminoacyl-tRNA synthetase</keyword>
<keyword id="KW-0067">ATP-binding</keyword>
<keyword id="KW-0963">Cytoplasm</keyword>
<keyword id="KW-0436">Ligase</keyword>
<keyword id="KW-0547">Nucleotide-binding</keyword>
<keyword id="KW-0648">Protein biosynthesis</keyword>
<keyword id="KW-1185">Reference proteome</keyword>
<proteinExistence type="inferred from homology"/>
<feature type="chain" id="PRO_1000095556" description="Histidine--tRNA ligase">
    <location>
        <begin position="1"/>
        <end position="431"/>
    </location>
</feature>
<dbReference type="EC" id="6.1.1.21" evidence="1"/>
<dbReference type="EMBL" id="AP008971">
    <property type="protein sequence ID" value="BAG08108.1"/>
    <property type="molecule type" value="Genomic_DNA"/>
</dbReference>
<dbReference type="RefSeq" id="WP_012290567.1">
    <property type="nucleotide sequence ID" value="NC_010376.1"/>
</dbReference>
<dbReference type="SMR" id="B0S168"/>
<dbReference type="STRING" id="334413.FMG_0690"/>
<dbReference type="KEGG" id="fma:FMG_0690"/>
<dbReference type="eggNOG" id="COG0124">
    <property type="taxonomic scope" value="Bacteria"/>
</dbReference>
<dbReference type="HOGENOM" id="CLU_025113_3_0_9"/>
<dbReference type="Proteomes" id="UP000001319">
    <property type="component" value="Chromosome"/>
</dbReference>
<dbReference type="GO" id="GO:0005737">
    <property type="term" value="C:cytoplasm"/>
    <property type="evidence" value="ECO:0007669"/>
    <property type="project" value="UniProtKB-SubCell"/>
</dbReference>
<dbReference type="GO" id="GO:0005524">
    <property type="term" value="F:ATP binding"/>
    <property type="evidence" value="ECO:0007669"/>
    <property type="project" value="UniProtKB-UniRule"/>
</dbReference>
<dbReference type="GO" id="GO:0140096">
    <property type="term" value="F:catalytic activity, acting on a protein"/>
    <property type="evidence" value="ECO:0007669"/>
    <property type="project" value="UniProtKB-ARBA"/>
</dbReference>
<dbReference type="GO" id="GO:0004821">
    <property type="term" value="F:histidine-tRNA ligase activity"/>
    <property type="evidence" value="ECO:0007669"/>
    <property type="project" value="UniProtKB-UniRule"/>
</dbReference>
<dbReference type="GO" id="GO:0016740">
    <property type="term" value="F:transferase activity"/>
    <property type="evidence" value="ECO:0007669"/>
    <property type="project" value="UniProtKB-ARBA"/>
</dbReference>
<dbReference type="GO" id="GO:0006427">
    <property type="term" value="P:histidyl-tRNA aminoacylation"/>
    <property type="evidence" value="ECO:0007669"/>
    <property type="project" value="UniProtKB-UniRule"/>
</dbReference>
<dbReference type="CDD" id="cd00773">
    <property type="entry name" value="HisRS-like_core"/>
    <property type="match status" value="1"/>
</dbReference>
<dbReference type="CDD" id="cd00859">
    <property type="entry name" value="HisRS_anticodon"/>
    <property type="match status" value="1"/>
</dbReference>
<dbReference type="Gene3D" id="3.40.50.800">
    <property type="entry name" value="Anticodon-binding domain"/>
    <property type="match status" value="1"/>
</dbReference>
<dbReference type="Gene3D" id="3.30.930.10">
    <property type="entry name" value="Bira Bifunctional Protein, Domain 2"/>
    <property type="match status" value="1"/>
</dbReference>
<dbReference type="HAMAP" id="MF_00127">
    <property type="entry name" value="His_tRNA_synth"/>
    <property type="match status" value="1"/>
</dbReference>
<dbReference type="InterPro" id="IPR006195">
    <property type="entry name" value="aa-tRNA-synth_II"/>
</dbReference>
<dbReference type="InterPro" id="IPR045864">
    <property type="entry name" value="aa-tRNA-synth_II/BPL/LPL"/>
</dbReference>
<dbReference type="InterPro" id="IPR004154">
    <property type="entry name" value="Anticodon-bd"/>
</dbReference>
<dbReference type="InterPro" id="IPR036621">
    <property type="entry name" value="Anticodon-bd_dom_sf"/>
</dbReference>
<dbReference type="InterPro" id="IPR015807">
    <property type="entry name" value="His-tRNA-ligase"/>
</dbReference>
<dbReference type="InterPro" id="IPR041715">
    <property type="entry name" value="HisRS-like_core"/>
</dbReference>
<dbReference type="InterPro" id="IPR004516">
    <property type="entry name" value="HisRS/HisZ"/>
</dbReference>
<dbReference type="InterPro" id="IPR033656">
    <property type="entry name" value="HisRS_anticodon"/>
</dbReference>
<dbReference type="NCBIfam" id="TIGR00442">
    <property type="entry name" value="hisS"/>
    <property type="match status" value="1"/>
</dbReference>
<dbReference type="PANTHER" id="PTHR11476:SF7">
    <property type="entry name" value="HISTIDINE--TRNA LIGASE"/>
    <property type="match status" value="1"/>
</dbReference>
<dbReference type="PANTHER" id="PTHR11476">
    <property type="entry name" value="HISTIDYL-TRNA SYNTHETASE"/>
    <property type="match status" value="1"/>
</dbReference>
<dbReference type="Pfam" id="PF03129">
    <property type="entry name" value="HGTP_anticodon"/>
    <property type="match status" value="1"/>
</dbReference>
<dbReference type="Pfam" id="PF13393">
    <property type="entry name" value="tRNA-synt_His"/>
    <property type="match status" value="1"/>
</dbReference>
<dbReference type="PIRSF" id="PIRSF001549">
    <property type="entry name" value="His-tRNA_synth"/>
    <property type="match status" value="1"/>
</dbReference>
<dbReference type="SUPFAM" id="SSF52954">
    <property type="entry name" value="Class II aaRS ABD-related"/>
    <property type="match status" value="1"/>
</dbReference>
<dbReference type="SUPFAM" id="SSF55681">
    <property type="entry name" value="Class II aaRS and biotin synthetases"/>
    <property type="match status" value="1"/>
</dbReference>
<dbReference type="PROSITE" id="PS50862">
    <property type="entry name" value="AA_TRNA_LIGASE_II"/>
    <property type="match status" value="1"/>
</dbReference>
<evidence type="ECO:0000255" key="1">
    <source>
        <dbReference type="HAMAP-Rule" id="MF_00127"/>
    </source>
</evidence>
<organism>
    <name type="scientific">Finegoldia magna (strain ATCC 29328 / DSM 20472 / WAL 2508)</name>
    <name type="common">Peptostreptococcus magnus</name>
    <dbReference type="NCBI Taxonomy" id="334413"/>
    <lineage>
        <taxon>Bacteria</taxon>
        <taxon>Bacillati</taxon>
        <taxon>Bacillota</taxon>
        <taxon>Tissierellia</taxon>
        <taxon>Tissierellales</taxon>
        <taxon>Peptoniphilaceae</taxon>
        <taxon>Finegoldia</taxon>
    </lineage>
</organism>
<gene>
    <name evidence="1" type="primary">hisS</name>
    <name type="ordered locus">FMG_0690</name>
</gene>
<accession>B0S168</accession>
<protein>
    <recommendedName>
        <fullName evidence="1">Histidine--tRNA ligase</fullName>
        <ecNumber evidence="1">6.1.1.21</ecNumber>
    </recommendedName>
    <alternativeName>
        <fullName evidence="1">Histidyl-tRNA synthetase</fullName>
        <shortName evidence="1">HisRS</shortName>
    </alternativeName>
</protein>
<name>SYH_FINM2</name>
<reference key="1">
    <citation type="journal article" date="2008" name="DNA Res.">
        <title>Complete genome sequence of Finegoldia magna, an anaerobic opportunistic pathogen.</title>
        <authorList>
            <person name="Goto T."/>
            <person name="Yamashita A."/>
            <person name="Hirakawa H."/>
            <person name="Matsutani M."/>
            <person name="Todo K."/>
            <person name="Ohshima K."/>
            <person name="Toh H."/>
            <person name="Miyamoto K."/>
            <person name="Kuhara S."/>
            <person name="Hattori M."/>
            <person name="Shimizu T."/>
            <person name="Akimoto S."/>
        </authorList>
    </citation>
    <scope>NUCLEOTIDE SEQUENCE [LARGE SCALE GENOMIC DNA]</scope>
    <source>
        <strain>ATCC 29328 / DSM 20472 / WAL 2508</strain>
    </source>
</reference>
<sequence>MIQPSTLPGMMELLPEDQLVFDTIKRKIEDVFIKNAFFSIDTPAIEKLDVLLSKGGGETSKQVFRIDNSKKNQGLRFDLTVPLAKYVSMYMQDLAFPFRRYQIAKVYRGERNQKGRYKEFYQCDIDIIGNEKLSLYNDAEIVKCMYEALKSIDVPEFEFQFNNRKILNGYFSYLGIDDFESCLRVIDKLDKIGIDNVKEELSKINLDASKIDTLLKFLEIDGTNQEIIEKLESLNIDNELFTCGVNELKFVYQDILSLGVNPENIKINLSITRGLDYYTGSVFETFFKDYREIGSICSGGRYDSLANNFTKSKLPGVGMSIGLTRLFYQLQELNLVKGKQTNFDCIIIPMKGYEKNAVKLMNDLRNSSVKCMSYLEDDKLKKKFNYADKLSVKYVIIIGQDEVEQNKFTLRNMENGNQELLELNEIIEKLK</sequence>
<comment type="catalytic activity">
    <reaction evidence="1">
        <text>tRNA(His) + L-histidine + ATP = L-histidyl-tRNA(His) + AMP + diphosphate + H(+)</text>
        <dbReference type="Rhea" id="RHEA:17313"/>
        <dbReference type="Rhea" id="RHEA-COMP:9665"/>
        <dbReference type="Rhea" id="RHEA-COMP:9689"/>
        <dbReference type="ChEBI" id="CHEBI:15378"/>
        <dbReference type="ChEBI" id="CHEBI:30616"/>
        <dbReference type="ChEBI" id="CHEBI:33019"/>
        <dbReference type="ChEBI" id="CHEBI:57595"/>
        <dbReference type="ChEBI" id="CHEBI:78442"/>
        <dbReference type="ChEBI" id="CHEBI:78527"/>
        <dbReference type="ChEBI" id="CHEBI:456215"/>
        <dbReference type="EC" id="6.1.1.21"/>
    </reaction>
</comment>
<comment type="subunit">
    <text evidence="1">Homodimer.</text>
</comment>
<comment type="subcellular location">
    <subcellularLocation>
        <location evidence="1">Cytoplasm</location>
    </subcellularLocation>
</comment>
<comment type="similarity">
    <text evidence="1">Belongs to the class-II aminoacyl-tRNA synthetase family.</text>
</comment>